<dbReference type="EMBL" id="BA000018">
    <property type="status" value="NOT_ANNOTATED_CDS"/>
    <property type="molecule type" value="Genomic_DNA"/>
</dbReference>
<dbReference type="SMR" id="P0C0A7"/>
<dbReference type="GO" id="GO:0005737">
    <property type="term" value="C:cytoplasm"/>
    <property type="evidence" value="ECO:0007669"/>
    <property type="project" value="UniProtKB-ARBA"/>
</dbReference>
<dbReference type="GO" id="GO:1990904">
    <property type="term" value="C:ribonucleoprotein complex"/>
    <property type="evidence" value="ECO:0007669"/>
    <property type="project" value="UniProtKB-KW"/>
</dbReference>
<dbReference type="GO" id="GO:0005840">
    <property type="term" value="C:ribosome"/>
    <property type="evidence" value="ECO:0007669"/>
    <property type="project" value="UniProtKB-KW"/>
</dbReference>
<dbReference type="GO" id="GO:0003735">
    <property type="term" value="F:structural constituent of ribosome"/>
    <property type="evidence" value="ECO:0007669"/>
    <property type="project" value="InterPro"/>
</dbReference>
<dbReference type="GO" id="GO:0006412">
    <property type="term" value="P:translation"/>
    <property type="evidence" value="ECO:0007669"/>
    <property type="project" value="UniProtKB-UniRule"/>
</dbReference>
<dbReference type="Gene3D" id="2.20.28.120">
    <property type="entry name" value="Ribosomal protein L33"/>
    <property type="match status" value="1"/>
</dbReference>
<dbReference type="HAMAP" id="MF_00294">
    <property type="entry name" value="Ribosomal_bL33"/>
    <property type="match status" value="1"/>
</dbReference>
<dbReference type="InterPro" id="IPR001705">
    <property type="entry name" value="Ribosomal_bL33"/>
</dbReference>
<dbReference type="InterPro" id="IPR018264">
    <property type="entry name" value="Ribosomal_bL33_CS"/>
</dbReference>
<dbReference type="InterPro" id="IPR038584">
    <property type="entry name" value="Ribosomal_bL33_sf"/>
</dbReference>
<dbReference type="InterPro" id="IPR011332">
    <property type="entry name" value="Ribosomal_zn-bd"/>
</dbReference>
<dbReference type="NCBIfam" id="NF001764">
    <property type="entry name" value="PRK00504.1"/>
    <property type="match status" value="1"/>
</dbReference>
<dbReference type="NCBIfam" id="TIGR01023">
    <property type="entry name" value="rpmG_bact"/>
    <property type="match status" value="1"/>
</dbReference>
<dbReference type="Pfam" id="PF00471">
    <property type="entry name" value="Ribosomal_L33"/>
    <property type="match status" value="1"/>
</dbReference>
<dbReference type="SUPFAM" id="SSF57829">
    <property type="entry name" value="Zn-binding ribosomal proteins"/>
    <property type="match status" value="1"/>
</dbReference>
<dbReference type="PROSITE" id="PS00582">
    <property type="entry name" value="RIBOSOMAL_L33"/>
    <property type="match status" value="1"/>
</dbReference>
<evidence type="ECO:0000255" key="1">
    <source>
        <dbReference type="HAMAP-Rule" id="MF_00294"/>
    </source>
</evidence>
<evidence type="ECO:0000305" key="2"/>
<protein>
    <recommendedName>
        <fullName evidence="1">Large ribosomal subunit protein bL33C</fullName>
    </recommendedName>
    <alternativeName>
        <fullName>50S ribosomal protein L33 3</fullName>
    </alternativeName>
</protein>
<comment type="similarity">
    <text evidence="2">Belongs to the bacterial ribosomal protein bL33 family.</text>
</comment>
<sequence length="47" mass="5375">MRKIPLNCEACGNRNYNVPKQEGSATRLTLKKYCPKCNAHTIHKESK</sequence>
<organism>
    <name type="scientific">Staphylococcus aureus (strain N315)</name>
    <dbReference type="NCBI Taxonomy" id="158879"/>
    <lineage>
        <taxon>Bacteria</taxon>
        <taxon>Bacillati</taxon>
        <taxon>Bacillota</taxon>
        <taxon>Bacilli</taxon>
        <taxon>Bacillales</taxon>
        <taxon>Staphylococcaceae</taxon>
        <taxon>Staphylococcus</taxon>
    </lineage>
</organism>
<proteinExistence type="inferred from homology"/>
<accession>P0C0A7</accession>
<keyword id="KW-0687">Ribonucleoprotein</keyword>
<keyword id="KW-0689">Ribosomal protein</keyword>
<gene>
    <name type="primary">rpmG3</name>
    <name type="ordered locus">SA0492.1</name>
</gene>
<feature type="chain" id="PRO_0000170218" description="Large ribosomal subunit protein bL33C">
    <location>
        <begin position="1"/>
        <end position="47"/>
    </location>
</feature>
<reference key="1">
    <citation type="journal article" date="2001" name="Lancet">
        <title>Whole genome sequencing of meticillin-resistant Staphylococcus aureus.</title>
        <authorList>
            <person name="Kuroda M."/>
            <person name="Ohta T."/>
            <person name="Uchiyama I."/>
            <person name="Baba T."/>
            <person name="Yuzawa H."/>
            <person name="Kobayashi I."/>
            <person name="Cui L."/>
            <person name="Oguchi A."/>
            <person name="Aoki K."/>
            <person name="Nagai Y."/>
            <person name="Lian J.-Q."/>
            <person name="Ito T."/>
            <person name="Kanamori M."/>
            <person name="Matsumaru H."/>
            <person name="Maruyama A."/>
            <person name="Murakami H."/>
            <person name="Hosoyama A."/>
            <person name="Mizutani-Ui Y."/>
            <person name="Takahashi N.K."/>
            <person name="Sawano T."/>
            <person name="Inoue R."/>
            <person name="Kaito C."/>
            <person name="Sekimizu K."/>
            <person name="Hirakawa H."/>
            <person name="Kuhara S."/>
            <person name="Goto S."/>
            <person name="Yabuzaki J."/>
            <person name="Kanehisa M."/>
            <person name="Yamashita A."/>
            <person name="Oshima K."/>
            <person name="Furuya K."/>
            <person name="Yoshino C."/>
            <person name="Shiba T."/>
            <person name="Hattori M."/>
            <person name="Ogasawara N."/>
            <person name="Hayashi H."/>
            <person name="Hiramatsu K."/>
        </authorList>
    </citation>
    <scope>NUCLEOTIDE SEQUENCE [LARGE SCALE GENOMIC DNA]</scope>
    <source>
        <strain>N315</strain>
    </source>
</reference>
<name>RL333_STAAN</name>